<name>ATPB_ACHLI</name>
<proteinExistence type="inferred from homology"/>
<evidence type="ECO:0000255" key="1">
    <source>
        <dbReference type="HAMAP-Rule" id="MF_01347"/>
    </source>
</evidence>
<reference key="1">
    <citation type="journal article" date="2011" name="J. Bacteriol.">
        <title>Complete genome and proteome of Acholeplasma laidlawii.</title>
        <authorList>
            <person name="Lazarev V.N."/>
            <person name="Levitskii S.A."/>
            <person name="Basovskii Y.I."/>
            <person name="Chukin M.M."/>
            <person name="Akopian T.A."/>
            <person name="Vereshchagin V.V."/>
            <person name="Kostrjukova E.S."/>
            <person name="Kovaleva G.Y."/>
            <person name="Kazanov M.D."/>
            <person name="Malko D.B."/>
            <person name="Vitreschak A.G."/>
            <person name="Sernova N.V."/>
            <person name="Gelfand M.S."/>
            <person name="Demina I.A."/>
            <person name="Serebryakova M.V."/>
            <person name="Galyamina M.A."/>
            <person name="Vtyurin N.N."/>
            <person name="Rogov S.I."/>
            <person name="Alexeev D.G."/>
            <person name="Ladygina V.G."/>
            <person name="Govorun V.M."/>
        </authorList>
    </citation>
    <scope>NUCLEOTIDE SEQUENCE [LARGE SCALE GENOMIC DNA]</scope>
    <source>
        <strain>PG-8A</strain>
    </source>
</reference>
<protein>
    <recommendedName>
        <fullName evidence="1">ATP synthase subunit beta</fullName>
        <ecNumber evidence="1">7.1.2.2</ecNumber>
    </recommendedName>
    <alternativeName>
        <fullName evidence="1">ATP synthase F1 sector subunit beta</fullName>
    </alternativeName>
    <alternativeName>
        <fullName evidence="1">F-ATPase subunit beta</fullName>
    </alternativeName>
</protein>
<sequence length="460" mass="50459">MKGKIVAIIGPVVDVSFMDELPNINDALEVRLSETETRTLEVASHLGNHMVRTISLEATDGLARGMEVIGTLSPIKVPVGKKVLGRMLNVLGKPMDGLDEVDTKRYMPIHKLPPDFHDLGGETEILETGIKVIDLIAPYIKGGKIGLFGGAGVGKTVLIQEMIHNVAKNHGGISVFTGVGERVREGHELYHEMKDSGVLDKTALVFGQMNEPPGARLRVALTGLTLAEYFRDGEKQNVLLFIDNIYRYIQAGSEISALLGRMPSAVGYQPTLATEMGKLQERITSTRYGSITSIQAVYVPADDYTDPAPATVFSHLDATTALSRKLTEDGIYPAIDPLGSTSRALTPSVVGQEHYDTAREVQRMLQRYHELLDIIAILGMDELSDDDKLVVHRARRIQNFLSQNMHVAERFTGQTGSFVPIRETIRGFKEILQGKHDDLPEEAFLLVGTIDDAIAKAKKL</sequence>
<feature type="chain" id="PRO_0000339467" description="ATP synthase subunit beta">
    <location>
        <begin position="1"/>
        <end position="460"/>
    </location>
</feature>
<feature type="binding site" evidence="1">
    <location>
        <begin position="149"/>
        <end position="156"/>
    </location>
    <ligand>
        <name>ATP</name>
        <dbReference type="ChEBI" id="CHEBI:30616"/>
    </ligand>
</feature>
<keyword id="KW-0066">ATP synthesis</keyword>
<keyword id="KW-0067">ATP-binding</keyword>
<keyword id="KW-1003">Cell membrane</keyword>
<keyword id="KW-0139">CF(1)</keyword>
<keyword id="KW-0375">Hydrogen ion transport</keyword>
<keyword id="KW-0406">Ion transport</keyword>
<keyword id="KW-0472">Membrane</keyword>
<keyword id="KW-0547">Nucleotide-binding</keyword>
<keyword id="KW-1185">Reference proteome</keyword>
<keyword id="KW-1278">Translocase</keyword>
<keyword id="KW-0813">Transport</keyword>
<comment type="function">
    <text evidence="1">Produces ATP from ADP in the presence of a proton gradient across the membrane. The catalytic sites are hosted primarily by the beta subunits.</text>
</comment>
<comment type="catalytic activity">
    <reaction evidence="1">
        <text>ATP + H2O + 4 H(+)(in) = ADP + phosphate + 5 H(+)(out)</text>
        <dbReference type="Rhea" id="RHEA:57720"/>
        <dbReference type="ChEBI" id="CHEBI:15377"/>
        <dbReference type="ChEBI" id="CHEBI:15378"/>
        <dbReference type="ChEBI" id="CHEBI:30616"/>
        <dbReference type="ChEBI" id="CHEBI:43474"/>
        <dbReference type="ChEBI" id="CHEBI:456216"/>
        <dbReference type="EC" id="7.1.2.2"/>
    </reaction>
</comment>
<comment type="subunit">
    <text evidence="1">F-type ATPases have 2 components, CF(1) - the catalytic core - and CF(0) - the membrane proton channel. CF(1) has five subunits: alpha(3), beta(3), gamma(1), delta(1), epsilon(1). CF(0) has three main subunits: a(1), b(2) and c(9-12). The alpha and beta chains form an alternating ring which encloses part of the gamma chain. CF(1) is attached to CF(0) by a central stalk formed by the gamma and epsilon chains, while a peripheral stalk is formed by the delta and b chains.</text>
</comment>
<comment type="subcellular location">
    <subcellularLocation>
        <location evidence="1">Cell membrane</location>
        <topology evidence="1">Peripheral membrane protein</topology>
    </subcellularLocation>
</comment>
<comment type="similarity">
    <text evidence="1">Belongs to the ATPase alpha/beta chains family.</text>
</comment>
<accession>A9NGW2</accession>
<organism>
    <name type="scientific">Acholeplasma laidlawii (strain PG-8A)</name>
    <dbReference type="NCBI Taxonomy" id="441768"/>
    <lineage>
        <taxon>Bacteria</taxon>
        <taxon>Bacillati</taxon>
        <taxon>Mycoplasmatota</taxon>
        <taxon>Mollicutes</taxon>
        <taxon>Acholeplasmatales</taxon>
        <taxon>Acholeplasmataceae</taxon>
        <taxon>Acholeplasma</taxon>
    </lineage>
</organism>
<gene>
    <name evidence="1" type="primary">atpD</name>
    <name type="ordered locus">ACL_0982</name>
</gene>
<dbReference type="EC" id="7.1.2.2" evidence="1"/>
<dbReference type="EMBL" id="CP000896">
    <property type="protein sequence ID" value="ABX81592.1"/>
    <property type="molecule type" value="Genomic_DNA"/>
</dbReference>
<dbReference type="RefSeq" id="WP_012242923.1">
    <property type="nucleotide sequence ID" value="NC_010163.1"/>
</dbReference>
<dbReference type="SMR" id="A9NGW2"/>
<dbReference type="STRING" id="441768.ACL_0982"/>
<dbReference type="GeneID" id="41339128"/>
<dbReference type="KEGG" id="acl:ACL_0982"/>
<dbReference type="eggNOG" id="COG0055">
    <property type="taxonomic scope" value="Bacteria"/>
</dbReference>
<dbReference type="HOGENOM" id="CLU_022398_0_2_14"/>
<dbReference type="OrthoDB" id="9801639at2"/>
<dbReference type="Proteomes" id="UP000008558">
    <property type="component" value="Chromosome"/>
</dbReference>
<dbReference type="GO" id="GO:0005886">
    <property type="term" value="C:plasma membrane"/>
    <property type="evidence" value="ECO:0007669"/>
    <property type="project" value="UniProtKB-SubCell"/>
</dbReference>
<dbReference type="GO" id="GO:0045259">
    <property type="term" value="C:proton-transporting ATP synthase complex"/>
    <property type="evidence" value="ECO:0007669"/>
    <property type="project" value="UniProtKB-KW"/>
</dbReference>
<dbReference type="GO" id="GO:0005524">
    <property type="term" value="F:ATP binding"/>
    <property type="evidence" value="ECO:0007669"/>
    <property type="project" value="UniProtKB-UniRule"/>
</dbReference>
<dbReference type="GO" id="GO:0016887">
    <property type="term" value="F:ATP hydrolysis activity"/>
    <property type="evidence" value="ECO:0007669"/>
    <property type="project" value="InterPro"/>
</dbReference>
<dbReference type="GO" id="GO:0046933">
    <property type="term" value="F:proton-transporting ATP synthase activity, rotational mechanism"/>
    <property type="evidence" value="ECO:0007669"/>
    <property type="project" value="UniProtKB-UniRule"/>
</dbReference>
<dbReference type="CDD" id="cd18110">
    <property type="entry name" value="ATP-synt_F1_beta_C"/>
    <property type="match status" value="1"/>
</dbReference>
<dbReference type="CDD" id="cd18115">
    <property type="entry name" value="ATP-synt_F1_beta_N"/>
    <property type="match status" value="1"/>
</dbReference>
<dbReference type="CDD" id="cd01133">
    <property type="entry name" value="F1-ATPase_beta_CD"/>
    <property type="match status" value="1"/>
</dbReference>
<dbReference type="FunFam" id="1.10.1140.10:FF:000001">
    <property type="entry name" value="ATP synthase subunit beta"/>
    <property type="match status" value="1"/>
</dbReference>
<dbReference type="FunFam" id="3.40.50.300:FF:000004">
    <property type="entry name" value="ATP synthase subunit beta"/>
    <property type="match status" value="1"/>
</dbReference>
<dbReference type="Gene3D" id="2.40.10.170">
    <property type="match status" value="1"/>
</dbReference>
<dbReference type="Gene3D" id="1.10.1140.10">
    <property type="entry name" value="Bovine Mitochondrial F1-atpase, Atp Synthase Beta Chain, Chain D, domain 3"/>
    <property type="match status" value="1"/>
</dbReference>
<dbReference type="Gene3D" id="3.40.50.300">
    <property type="entry name" value="P-loop containing nucleotide triphosphate hydrolases"/>
    <property type="match status" value="1"/>
</dbReference>
<dbReference type="HAMAP" id="MF_01347">
    <property type="entry name" value="ATP_synth_beta_bact"/>
    <property type="match status" value="1"/>
</dbReference>
<dbReference type="InterPro" id="IPR003593">
    <property type="entry name" value="AAA+_ATPase"/>
</dbReference>
<dbReference type="InterPro" id="IPR055190">
    <property type="entry name" value="ATP-synt_VA_C"/>
</dbReference>
<dbReference type="InterPro" id="IPR005722">
    <property type="entry name" value="ATP_synth_F1_bsu"/>
</dbReference>
<dbReference type="InterPro" id="IPR020003">
    <property type="entry name" value="ATPase_a/bsu_AS"/>
</dbReference>
<dbReference type="InterPro" id="IPR050053">
    <property type="entry name" value="ATPase_alpha/beta_chains"/>
</dbReference>
<dbReference type="InterPro" id="IPR004100">
    <property type="entry name" value="ATPase_F1/V1/A1_a/bsu_N"/>
</dbReference>
<dbReference type="InterPro" id="IPR036121">
    <property type="entry name" value="ATPase_F1/V1/A1_a/bsu_N_sf"/>
</dbReference>
<dbReference type="InterPro" id="IPR000194">
    <property type="entry name" value="ATPase_F1/V1/A1_a/bsu_nucl-bd"/>
</dbReference>
<dbReference type="InterPro" id="IPR024034">
    <property type="entry name" value="ATPase_F1/V1_b/a_C"/>
</dbReference>
<dbReference type="InterPro" id="IPR027417">
    <property type="entry name" value="P-loop_NTPase"/>
</dbReference>
<dbReference type="NCBIfam" id="TIGR01039">
    <property type="entry name" value="atpD"/>
    <property type="match status" value="1"/>
</dbReference>
<dbReference type="PANTHER" id="PTHR15184">
    <property type="entry name" value="ATP SYNTHASE"/>
    <property type="match status" value="1"/>
</dbReference>
<dbReference type="PANTHER" id="PTHR15184:SF71">
    <property type="entry name" value="ATP SYNTHASE SUBUNIT BETA, MITOCHONDRIAL"/>
    <property type="match status" value="1"/>
</dbReference>
<dbReference type="Pfam" id="PF00006">
    <property type="entry name" value="ATP-synt_ab"/>
    <property type="match status" value="1"/>
</dbReference>
<dbReference type="Pfam" id="PF02874">
    <property type="entry name" value="ATP-synt_ab_N"/>
    <property type="match status" value="1"/>
</dbReference>
<dbReference type="Pfam" id="PF22919">
    <property type="entry name" value="ATP-synt_VA_C"/>
    <property type="match status" value="1"/>
</dbReference>
<dbReference type="SMART" id="SM00382">
    <property type="entry name" value="AAA"/>
    <property type="match status" value="1"/>
</dbReference>
<dbReference type="SUPFAM" id="SSF47917">
    <property type="entry name" value="C-terminal domain of alpha and beta subunits of F1 ATP synthase"/>
    <property type="match status" value="1"/>
</dbReference>
<dbReference type="SUPFAM" id="SSF50615">
    <property type="entry name" value="N-terminal domain of alpha and beta subunits of F1 ATP synthase"/>
    <property type="match status" value="1"/>
</dbReference>
<dbReference type="SUPFAM" id="SSF52540">
    <property type="entry name" value="P-loop containing nucleoside triphosphate hydrolases"/>
    <property type="match status" value="1"/>
</dbReference>
<dbReference type="PROSITE" id="PS00152">
    <property type="entry name" value="ATPASE_ALPHA_BETA"/>
    <property type="match status" value="1"/>
</dbReference>